<feature type="chain" id="PRO_0000266630" description="Small ribosomal subunit protein bS21">
    <location>
        <begin position="1"/>
        <end position="70"/>
    </location>
</feature>
<protein>
    <recommendedName>
        <fullName evidence="1">Small ribosomal subunit protein bS21</fullName>
    </recommendedName>
    <alternativeName>
        <fullName evidence="2">30S ribosomal protein S21</fullName>
    </alternativeName>
</protein>
<dbReference type="EMBL" id="AM167904">
    <property type="protein sequence ID" value="CAJ49941.1"/>
    <property type="molecule type" value="Genomic_DNA"/>
</dbReference>
<dbReference type="RefSeq" id="WP_012417992.1">
    <property type="nucleotide sequence ID" value="NC_010645.1"/>
</dbReference>
<dbReference type="SMR" id="Q2KYB0"/>
<dbReference type="STRING" id="360910.BAV2331"/>
<dbReference type="GeneID" id="92934492"/>
<dbReference type="KEGG" id="bav:BAV2331"/>
<dbReference type="eggNOG" id="COG0828">
    <property type="taxonomic scope" value="Bacteria"/>
</dbReference>
<dbReference type="HOGENOM" id="CLU_159258_1_2_4"/>
<dbReference type="OrthoDB" id="9799244at2"/>
<dbReference type="Proteomes" id="UP000001977">
    <property type="component" value="Chromosome"/>
</dbReference>
<dbReference type="GO" id="GO:1990904">
    <property type="term" value="C:ribonucleoprotein complex"/>
    <property type="evidence" value="ECO:0007669"/>
    <property type="project" value="UniProtKB-KW"/>
</dbReference>
<dbReference type="GO" id="GO:0005840">
    <property type="term" value="C:ribosome"/>
    <property type="evidence" value="ECO:0007669"/>
    <property type="project" value="UniProtKB-KW"/>
</dbReference>
<dbReference type="GO" id="GO:0003735">
    <property type="term" value="F:structural constituent of ribosome"/>
    <property type="evidence" value="ECO:0007669"/>
    <property type="project" value="InterPro"/>
</dbReference>
<dbReference type="GO" id="GO:0006412">
    <property type="term" value="P:translation"/>
    <property type="evidence" value="ECO:0007669"/>
    <property type="project" value="UniProtKB-UniRule"/>
</dbReference>
<dbReference type="Gene3D" id="1.20.5.1150">
    <property type="entry name" value="Ribosomal protein S8"/>
    <property type="match status" value="1"/>
</dbReference>
<dbReference type="HAMAP" id="MF_00358">
    <property type="entry name" value="Ribosomal_bS21"/>
    <property type="match status" value="1"/>
</dbReference>
<dbReference type="InterPro" id="IPR001911">
    <property type="entry name" value="Ribosomal_bS21"/>
</dbReference>
<dbReference type="InterPro" id="IPR018278">
    <property type="entry name" value="Ribosomal_bS21_CS"/>
</dbReference>
<dbReference type="InterPro" id="IPR038380">
    <property type="entry name" value="Ribosomal_bS21_sf"/>
</dbReference>
<dbReference type="NCBIfam" id="TIGR00030">
    <property type="entry name" value="S21p"/>
    <property type="match status" value="1"/>
</dbReference>
<dbReference type="PANTHER" id="PTHR21109">
    <property type="entry name" value="MITOCHONDRIAL 28S RIBOSOMAL PROTEIN S21"/>
    <property type="match status" value="1"/>
</dbReference>
<dbReference type="PANTHER" id="PTHR21109:SF22">
    <property type="entry name" value="SMALL RIBOSOMAL SUBUNIT PROTEIN BS21"/>
    <property type="match status" value="1"/>
</dbReference>
<dbReference type="Pfam" id="PF01165">
    <property type="entry name" value="Ribosomal_S21"/>
    <property type="match status" value="1"/>
</dbReference>
<dbReference type="PRINTS" id="PR00976">
    <property type="entry name" value="RIBOSOMALS21"/>
</dbReference>
<dbReference type="PROSITE" id="PS01181">
    <property type="entry name" value="RIBOSOMAL_S21"/>
    <property type="match status" value="1"/>
</dbReference>
<sequence>MPIVRLKENEPFEAALRRFKRTIEKTGLLTELRSREFYEKPTAERKRKHAAAVKRHYKRIRSQQLPPRMY</sequence>
<proteinExistence type="inferred from homology"/>
<reference key="1">
    <citation type="journal article" date="2006" name="J. Bacteriol.">
        <title>Comparison of the genome sequence of the poultry pathogen Bordetella avium with those of B. bronchiseptica, B. pertussis, and B. parapertussis reveals extensive diversity in surface structures associated with host interaction.</title>
        <authorList>
            <person name="Sebaihia M."/>
            <person name="Preston A."/>
            <person name="Maskell D.J."/>
            <person name="Kuzmiak H."/>
            <person name="Connell T.D."/>
            <person name="King N.D."/>
            <person name="Orndorff P.E."/>
            <person name="Miyamoto D.M."/>
            <person name="Thomson N.R."/>
            <person name="Harris D."/>
            <person name="Goble A."/>
            <person name="Lord A."/>
            <person name="Murphy L."/>
            <person name="Quail M.A."/>
            <person name="Rutter S."/>
            <person name="Squares R."/>
            <person name="Squares S."/>
            <person name="Woodward J."/>
            <person name="Parkhill J."/>
            <person name="Temple L.M."/>
        </authorList>
    </citation>
    <scope>NUCLEOTIDE SEQUENCE [LARGE SCALE GENOMIC DNA]</scope>
    <source>
        <strain>197N</strain>
    </source>
</reference>
<keyword id="KW-1185">Reference proteome</keyword>
<keyword id="KW-0687">Ribonucleoprotein</keyword>
<keyword id="KW-0689">Ribosomal protein</keyword>
<name>RS21_BORA1</name>
<organism>
    <name type="scientific">Bordetella avium (strain 197N)</name>
    <dbReference type="NCBI Taxonomy" id="360910"/>
    <lineage>
        <taxon>Bacteria</taxon>
        <taxon>Pseudomonadati</taxon>
        <taxon>Pseudomonadota</taxon>
        <taxon>Betaproteobacteria</taxon>
        <taxon>Burkholderiales</taxon>
        <taxon>Alcaligenaceae</taxon>
        <taxon>Bordetella</taxon>
    </lineage>
</organism>
<comment type="similarity">
    <text evidence="1">Belongs to the bacterial ribosomal protein bS21 family.</text>
</comment>
<evidence type="ECO:0000255" key="1">
    <source>
        <dbReference type="HAMAP-Rule" id="MF_00358"/>
    </source>
</evidence>
<evidence type="ECO:0000305" key="2"/>
<gene>
    <name evidence="1" type="primary">rpsU</name>
    <name type="ordered locus">BAV2331</name>
</gene>
<accession>Q2KYB0</accession>